<reference key="1">
    <citation type="journal article" date="2009" name="PLoS Genet.">
        <title>Organised genome dynamics in the Escherichia coli species results in highly diverse adaptive paths.</title>
        <authorList>
            <person name="Touchon M."/>
            <person name="Hoede C."/>
            <person name="Tenaillon O."/>
            <person name="Barbe V."/>
            <person name="Baeriswyl S."/>
            <person name="Bidet P."/>
            <person name="Bingen E."/>
            <person name="Bonacorsi S."/>
            <person name="Bouchier C."/>
            <person name="Bouvet O."/>
            <person name="Calteau A."/>
            <person name="Chiapello H."/>
            <person name="Clermont O."/>
            <person name="Cruveiller S."/>
            <person name="Danchin A."/>
            <person name="Diard M."/>
            <person name="Dossat C."/>
            <person name="Karoui M.E."/>
            <person name="Frapy E."/>
            <person name="Garry L."/>
            <person name="Ghigo J.M."/>
            <person name="Gilles A.M."/>
            <person name="Johnson J."/>
            <person name="Le Bouguenec C."/>
            <person name="Lescat M."/>
            <person name="Mangenot S."/>
            <person name="Martinez-Jehanne V."/>
            <person name="Matic I."/>
            <person name="Nassif X."/>
            <person name="Oztas S."/>
            <person name="Petit M.A."/>
            <person name="Pichon C."/>
            <person name="Rouy Z."/>
            <person name="Ruf C.S."/>
            <person name="Schneider D."/>
            <person name="Tourret J."/>
            <person name="Vacherie B."/>
            <person name="Vallenet D."/>
            <person name="Medigue C."/>
            <person name="Rocha E.P.C."/>
            <person name="Denamur E."/>
        </authorList>
    </citation>
    <scope>NUCLEOTIDE SEQUENCE [LARGE SCALE GENOMIC DNA]</scope>
    <source>
        <strain>IAI1</strain>
    </source>
</reference>
<feature type="chain" id="PRO_0000388960" description="UPF0757 protein YmgG">
    <location>
        <begin position="1"/>
        <end position="114"/>
    </location>
</feature>
<sequence length="114" mass="10807">MKKKILAFGLISALFCSTPAMADMNRTTKGALLGAGVGLLTGNGVNGVLKGAAVGAGVGAVTEKGRDGKNARKGAKVGAAVGAVTGVLTGNGLEGAIKGAVIGGTGGAILGKMK</sequence>
<name>YMGG_ECO8A</name>
<organism>
    <name type="scientific">Escherichia coli O8 (strain IAI1)</name>
    <dbReference type="NCBI Taxonomy" id="585034"/>
    <lineage>
        <taxon>Bacteria</taxon>
        <taxon>Pseudomonadati</taxon>
        <taxon>Pseudomonadota</taxon>
        <taxon>Gammaproteobacteria</taxon>
        <taxon>Enterobacterales</taxon>
        <taxon>Enterobacteriaceae</taxon>
        <taxon>Escherichia</taxon>
    </lineage>
</organism>
<protein>
    <recommendedName>
        <fullName evidence="1">UPF0757 protein YmgG</fullName>
    </recommendedName>
</protein>
<comment type="similarity">
    <text evidence="1">Belongs to the UPF0757 family.</text>
</comment>
<comment type="sequence caution" evidence="2">
    <conflict type="erroneous initiation">
        <sequence resource="EMBL-CDS" id="CAQ98050"/>
    </conflict>
</comment>
<gene>
    <name evidence="1" type="primary">ymgG</name>
    <name type="ordered locus">ECIAI1_1188</name>
</gene>
<dbReference type="EMBL" id="CU928160">
    <property type="protein sequence ID" value="CAQ98050.1"/>
    <property type="status" value="ALT_INIT"/>
    <property type="molecule type" value="Genomic_DNA"/>
</dbReference>
<dbReference type="RefSeq" id="WP_000726974.1">
    <property type="nucleotide sequence ID" value="NC_011741.1"/>
</dbReference>
<dbReference type="KEGG" id="ecr:ECIAI1_1188"/>
<dbReference type="HOGENOM" id="CLU_164687_0_0_6"/>
<dbReference type="HAMAP" id="MF_01455">
    <property type="entry name" value="UPF0757"/>
    <property type="match status" value="1"/>
</dbReference>
<dbReference type="InterPro" id="IPR025693">
    <property type="entry name" value="Gly-zipper_OmpA-like_dom"/>
</dbReference>
<dbReference type="InterPro" id="IPR027367">
    <property type="entry name" value="Gly-zipper_YMGG"/>
</dbReference>
<dbReference type="InterPro" id="IPR022833">
    <property type="entry name" value="UPF0757_YmgG"/>
</dbReference>
<dbReference type="Pfam" id="PF13436">
    <property type="entry name" value="Gly-zipper_OmpA"/>
    <property type="match status" value="1"/>
</dbReference>
<dbReference type="Pfam" id="PF13441">
    <property type="entry name" value="Gly-zipper_YMGG"/>
    <property type="match status" value="1"/>
</dbReference>
<accession>B7LX85</accession>
<evidence type="ECO:0000255" key="1">
    <source>
        <dbReference type="HAMAP-Rule" id="MF_01455"/>
    </source>
</evidence>
<evidence type="ECO:0000305" key="2"/>
<proteinExistence type="inferred from homology"/>